<organism>
    <name type="scientific">Tityus discrepans</name>
    <name type="common">Venezuelan scorpion</name>
    <dbReference type="NCBI Taxonomy" id="57059"/>
    <lineage>
        <taxon>Eukaryota</taxon>
        <taxon>Metazoa</taxon>
        <taxon>Ecdysozoa</taxon>
        <taxon>Arthropoda</taxon>
        <taxon>Chelicerata</taxon>
        <taxon>Arachnida</taxon>
        <taxon>Scorpiones</taxon>
        <taxon>Buthida</taxon>
        <taxon>Buthoidea</taxon>
        <taxon>Buthidae</taxon>
        <taxon>Tityus</taxon>
    </lineage>
</organism>
<feature type="signal peptide" evidence="1">
    <location>
        <begin position="1" status="less than"/>
        <end position="8"/>
    </location>
</feature>
<feature type="chain" id="PRO_0000253769" description="Toxin Td6">
    <location>
        <begin position="9"/>
        <end position="72"/>
    </location>
</feature>
<feature type="domain" description="LCN-type CS-alpha/beta" evidence="2">
    <location>
        <begin position="9"/>
        <end position="71"/>
    </location>
</feature>
<feature type="modified residue" description="Arginine amide" evidence="1">
    <location>
        <position position="72"/>
    </location>
</feature>
<feature type="disulfide bond" evidence="2">
    <location>
        <begin position="19"/>
        <end position="70"/>
    </location>
</feature>
<feature type="disulfide bond" evidence="2">
    <location>
        <begin position="23"/>
        <end position="45"/>
    </location>
</feature>
<feature type="disulfide bond" evidence="2">
    <location>
        <begin position="31"/>
        <end position="51"/>
    </location>
</feature>
<feature type="disulfide bond" evidence="2">
    <location>
        <begin position="35"/>
        <end position="53"/>
    </location>
</feature>
<feature type="non-terminal residue">
    <location>
        <position position="1"/>
    </location>
</feature>
<reference key="1">
    <citation type="journal article" date="2006" name="Comp. Biochem. Physiol.">
        <title>Diversity of long-chain toxins in Tityus zulianus and Tityus discrepans venoms (Scorpiones, Buthidae): molecular, immunological, and mass spectral analyses.</title>
        <authorList>
            <person name="Borges A."/>
            <person name="Garcia C.C."/>
            <person name="Lugo E."/>
            <person name="Alfonzo M.J."/>
            <person name="Jowers M.J."/>
            <person name="Op den Camp H.J.M."/>
        </authorList>
    </citation>
    <scope>NUCLEOTIDE SEQUENCE [MRNA]</scope>
    <source>
        <tissue>Venom gland</tissue>
    </source>
</reference>
<reference key="2">
    <citation type="journal article" date="2012" name="PLoS ONE">
        <title>Identification and phylogenetic analysis of Tityus pachyurus and Tityus obscurus novel putative Na+-channel scorpion toxins.</title>
        <authorList>
            <person name="Guerrero-Vargas J.A."/>
            <person name="Mourao C.B."/>
            <person name="Quintero-Hernandez V."/>
            <person name="Possani L.D."/>
            <person name="Schwartz E.F."/>
        </authorList>
    </citation>
    <scope>NOMENCLATURE</scope>
</reference>
<sequence>IGMIVECEKEGYLMEANGCKRSCTLRPGHYCANECSYVKGKNGYCYAWVACYCYNMPDSVKIWDSATNTCGRGK</sequence>
<evidence type="ECO:0000250" key="1"/>
<evidence type="ECO:0000255" key="2">
    <source>
        <dbReference type="PROSITE-ProRule" id="PRU01210"/>
    </source>
</evidence>
<evidence type="ECO:0000305" key="3"/>
<proteinExistence type="evidence at transcript level"/>
<comment type="function">
    <text evidence="1">Beta toxins bind voltage-independently at site-4 of sodium channels (Nav) and shift the voltage of activation toward more negative potentials thereby affecting sodium channel activation and promoting spontaneous and repetitive firing.</text>
</comment>
<comment type="subcellular location">
    <subcellularLocation>
        <location>Secreted</location>
    </subcellularLocation>
</comment>
<comment type="tissue specificity">
    <text>Expressed by the venom gland.</text>
</comment>
<comment type="domain">
    <text evidence="3">Has the structural arrangement of an alpha-helix connected to antiparallel beta-sheets by disulfide bonds (CS-alpha/beta).</text>
</comment>
<comment type="miscellaneous">
    <text evidence="1">Negative results: does not affect the cardiac Nav1.5/SCN5A, the peripheral nerve channel Nav1.7/SCN9A, and the voltage-dependent potassium channel Kv1.5/KCNA5.</text>
</comment>
<comment type="similarity">
    <text evidence="3">Belongs to the long (4 C-C) scorpion toxin superfamily. Sodium channel inhibitor family. Beta subfamily.</text>
</comment>
<keyword id="KW-0027">Amidation</keyword>
<keyword id="KW-1015">Disulfide bond</keyword>
<keyword id="KW-0872">Ion channel impairing toxin</keyword>
<keyword id="KW-0528">Neurotoxin</keyword>
<keyword id="KW-0964">Secreted</keyword>
<keyword id="KW-0732">Signal</keyword>
<keyword id="KW-0800">Toxin</keyword>
<keyword id="KW-0738">Voltage-gated sodium channel impairing toxin</keyword>
<dbReference type="EMBL" id="DQ075239">
    <property type="protein sequence ID" value="AAZ29718.1"/>
    <property type="molecule type" value="mRNA"/>
</dbReference>
<dbReference type="SMR" id="Q1I167"/>
<dbReference type="GO" id="GO:0005576">
    <property type="term" value="C:extracellular region"/>
    <property type="evidence" value="ECO:0007669"/>
    <property type="project" value="UniProtKB-SubCell"/>
</dbReference>
<dbReference type="GO" id="GO:0019871">
    <property type="term" value="F:sodium channel inhibitor activity"/>
    <property type="evidence" value="ECO:0007669"/>
    <property type="project" value="InterPro"/>
</dbReference>
<dbReference type="GO" id="GO:0090729">
    <property type="term" value="F:toxin activity"/>
    <property type="evidence" value="ECO:0007669"/>
    <property type="project" value="UniProtKB-KW"/>
</dbReference>
<dbReference type="GO" id="GO:0006952">
    <property type="term" value="P:defense response"/>
    <property type="evidence" value="ECO:0007669"/>
    <property type="project" value="InterPro"/>
</dbReference>
<dbReference type="CDD" id="cd23106">
    <property type="entry name" value="neurotoxins_LC_scorpion"/>
    <property type="match status" value="1"/>
</dbReference>
<dbReference type="FunFam" id="3.30.30.10:FF:000002">
    <property type="entry name" value="Alpha-like toxin BmK-M1"/>
    <property type="match status" value="1"/>
</dbReference>
<dbReference type="Gene3D" id="3.30.30.10">
    <property type="entry name" value="Knottin, scorpion toxin-like"/>
    <property type="match status" value="1"/>
</dbReference>
<dbReference type="InterPro" id="IPR044062">
    <property type="entry name" value="LCN-type_CS_alpha_beta_dom"/>
</dbReference>
<dbReference type="InterPro" id="IPR003614">
    <property type="entry name" value="Scorpion_toxin-like"/>
</dbReference>
<dbReference type="InterPro" id="IPR036574">
    <property type="entry name" value="Scorpion_toxin-like_sf"/>
</dbReference>
<dbReference type="InterPro" id="IPR018218">
    <property type="entry name" value="Scorpion_toxinL"/>
</dbReference>
<dbReference type="InterPro" id="IPR002061">
    <property type="entry name" value="Scorpion_toxinL/defensin"/>
</dbReference>
<dbReference type="Pfam" id="PF00537">
    <property type="entry name" value="Toxin_3"/>
    <property type="match status" value="1"/>
</dbReference>
<dbReference type="PRINTS" id="PR00285">
    <property type="entry name" value="SCORPNTOXIN"/>
</dbReference>
<dbReference type="SMART" id="SM00505">
    <property type="entry name" value="Knot1"/>
    <property type="match status" value="1"/>
</dbReference>
<dbReference type="SUPFAM" id="SSF57095">
    <property type="entry name" value="Scorpion toxin-like"/>
    <property type="match status" value="1"/>
</dbReference>
<dbReference type="PROSITE" id="PS51863">
    <property type="entry name" value="LCN_CSAB"/>
    <property type="match status" value="1"/>
</dbReference>
<name>SCX6_TITDI</name>
<protein>
    <recommendedName>
        <fullName>Toxin Td6</fullName>
    </recommendedName>
    <alternativeName>
        <fullName>T-beta* NaTx13.4</fullName>
    </alternativeName>
</protein>
<accession>Q1I167</accession>